<keyword id="KW-0963">Cytoplasm</keyword>
<keyword id="KW-0396">Initiation factor</keyword>
<keyword id="KW-0648">Protein biosynthesis</keyword>
<keyword id="KW-0694">RNA-binding</keyword>
<keyword id="KW-0699">rRNA-binding</keyword>
<reference key="1">
    <citation type="journal article" date="2003" name="Nat. Genet.">
        <title>Comparative analysis of the genome sequences of Bordetella pertussis, Bordetella parapertussis and Bordetella bronchiseptica.</title>
        <authorList>
            <person name="Parkhill J."/>
            <person name="Sebaihia M."/>
            <person name="Preston A."/>
            <person name="Murphy L.D."/>
            <person name="Thomson N.R."/>
            <person name="Harris D.E."/>
            <person name="Holden M.T.G."/>
            <person name="Churcher C.M."/>
            <person name="Bentley S.D."/>
            <person name="Mungall K.L."/>
            <person name="Cerdeno-Tarraga A.-M."/>
            <person name="Temple L."/>
            <person name="James K.D."/>
            <person name="Harris B."/>
            <person name="Quail M.A."/>
            <person name="Achtman M."/>
            <person name="Atkin R."/>
            <person name="Baker S."/>
            <person name="Basham D."/>
            <person name="Bason N."/>
            <person name="Cherevach I."/>
            <person name="Chillingworth T."/>
            <person name="Collins M."/>
            <person name="Cronin A."/>
            <person name="Davis P."/>
            <person name="Doggett J."/>
            <person name="Feltwell T."/>
            <person name="Goble A."/>
            <person name="Hamlin N."/>
            <person name="Hauser H."/>
            <person name="Holroyd S."/>
            <person name="Jagels K."/>
            <person name="Leather S."/>
            <person name="Moule S."/>
            <person name="Norberczak H."/>
            <person name="O'Neil S."/>
            <person name="Ormond D."/>
            <person name="Price C."/>
            <person name="Rabbinowitsch E."/>
            <person name="Rutter S."/>
            <person name="Sanders M."/>
            <person name="Saunders D."/>
            <person name="Seeger K."/>
            <person name="Sharp S."/>
            <person name="Simmonds M."/>
            <person name="Skelton J."/>
            <person name="Squares R."/>
            <person name="Squares S."/>
            <person name="Stevens K."/>
            <person name="Unwin L."/>
            <person name="Whitehead S."/>
            <person name="Barrell B.G."/>
            <person name="Maskell D.J."/>
        </authorList>
    </citation>
    <scope>NUCLEOTIDE SEQUENCE [LARGE SCALE GENOMIC DNA]</scope>
    <source>
        <strain>ATCC BAA-588 / NCTC 13252 / RB50</strain>
    </source>
</reference>
<dbReference type="EMBL" id="BX640437">
    <property type="protein sequence ID" value="CAE30554.1"/>
    <property type="molecule type" value="Genomic_DNA"/>
</dbReference>
<dbReference type="SMR" id="Q7WRA2"/>
<dbReference type="KEGG" id="bbr:BB0052"/>
<dbReference type="eggNOG" id="COG0361">
    <property type="taxonomic scope" value="Bacteria"/>
</dbReference>
<dbReference type="HOGENOM" id="CLU_151267_1_0_4"/>
<dbReference type="Proteomes" id="UP000001027">
    <property type="component" value="Chromosome"/>
</dbReference>
<dbReference type="GO" id="GO:0005829">
    <property type="term" value="C:cytosol"/>
    <property type="evidence" value="ECO:0007669"/>
    <property type="project" value="TreeGrafter"/>
</dbReference>
<dbReference type="GO" id="GO:0043022">
    <property type="term" value="F:ribosome binding"/>
    <property type="evidence" value="ECO:0007669"/>
    <property type="project" value="UniProtKB-UniRule"/>
</dbReference>
<dbReference type="GO" id="GO:0019843">
    <property type="term" value="F:rRNA binding"/>
    <property type="evidence" value="ECO:0007669"/>
    <property type="project" value="UniProtKB-UniRule"/>
</dbReference>
<dbReference type="GO" id="GO:0003743">
    <property type="term" value="F:translation initiation factor activity"/>
    <property type="evidence" value="ECO:0007669"/>
    <property type="project" value="UniProtKB-UniRule"/>
</dbReference>
<dbReference type="CDD" id="cd04451">
    <property type="entry name" value="S1_IF1"/>
    <property type="match status" value="1"/>
</dbReference>
<dbReference type="FunFam" id="2.40.50.140:FF:000002">
    <property type="entry name" value="Translation initiation factor IF-1"/>
    <property type="match status" value="1"/>
</dbReference>
<dbReference type="Gene3D" id="2.40.50.140">
    <property type="entry name" value="Nucleic acid-binding proteins"/>
    <property type="match status" value="1"/>
</dbReference>
<dbReference type="HAMAP" id="MF_00075">
    <property type="entry name" value="IF_1"/>
    <property type="match status" value="1"/>
</dbReference>
<dbReference type="InterPro" id="IPR012340">
    <property type="entry name" value="NA-bd_OB-fold"/>
</dbReference>
<dbReference type="InterPro" id="IPR006196">
    <property type="entry name" value="RNA-binding_domain_S1_IF1"/>
</dbReference>
<dbReference type="InterPro" id="IPR004368">
    <property type="entry name" value="TIF_IF1"/>
</dbReference>
<dbReference type="NCBIfam" id="TIGR00008">
    <property type="entry name" value="infA"/>
    <property type="match status" value="1"/>
</dbReference>
<dbReference type="PANTHER" id="PTHR33370">
    <property type="entry name" value="TRANSLATION INITIATION FACTOR IF-1, CHLOROPLASTIC"/>
    <property type="match status" value="1"/>
</dbReference>
<dbReference type="PANTHER" id="PTHR33370:SF1">
    <property type="entry name" value="TRANSLATION INITIATION FACTOR IF-1, CHLOROPLASTIC"/>
    <property type="match status" value="1"/>
</dbReference>
<dbReference type="Pfam" id="PF01176">
    <property type="entry name" value="eIF-1a"/>
    <property type="match status" value="1"/>
</dbReference>
<dbReference type="SUPFAM" id="SSF50249">
    <property type="entry name" value="Nucleic acid-binding proteins"/>
    <property type="match status" value="1"/>
</dbReference>
<dbReference type="PROSITE" id="PS50832">
    <property type="entry name" value="S1_IF1_TYPE"/>
    <property type="match status" value="1"/>
</dbReference>
<organism>
    <name type="scientific">Bordetella bronchiseptica (strain ATCC BAA-588 / NCTC 13252 / RB50)</name>
    <name type="common">Alcaligenes bronchisepticus</name>
    <dbReference type="NCBI Taxonomy" id="257310"/>
    <lineage>
        <taxon>Bacteria</taxon>
        <taxon>Pseudomonadati</taxon>
        <taxon>Pseudomonadota</taxon>
        <taxon>Betaproteobacteria</taxon>
        <taxon>Burkholderiales</taxon>
        <taxon>Alcaligenaceae</taxon>
        <taxon>Bordetella</taxon>
    </lineage>
</organism>
<comment type="function">
    <text evidence="1">One of the essential components for the initiation of protein synthesis. Stabilizes the binding of IF-2 and IF-3 on the 30S subunit to which N-formylmethionyl-tRNA(fMet) subsequently binds. Helps modulate mRNA selection, yielding the 30S pre-initiation complex (PIC). Upon addition of the 50S ribosomal subunit IF-1, IF-2 and IF-3 are released leaving the mature 70S translation initiation complex.</text>
</comment>
<comment type="subunit">
    <text evidence="1">Component of the 30S ribosomal translation pre-initiation complex which assembles on the 30S ribosome in the order IF-2 and IF-3, IF-1 and N-formylmethionyl-tRNA(fMet); mRNA recruitment can occur at any time during PIC assembly.</text>
</comment>
<comment type="subcellular location">
    <subcellularLocation>
        <location evidence="1">Cytoplasm</location>
    </subcellularLocation>
</comment>
<comment type="similarity">
    <text evidence="1">Belongs to the IF-1 family.</text>
</comment>
<protein>
    <recommendedName>
        <fullName evidence="1">Translation initiation factor IF-1 1</fullName>
    </recommendedName>
</protein>
<proteinExistence type="inferred from homology"/>
<sequence length="72" mass="8264">MSKDDVIQMQGEVLENLPNATFRVKLENGHVVLGHISGKMRMHYIRILPGDKVTVELTPYDLTRARIVFRSK</sequence>
<evidence type="ECO:0000255" key="1">
    <source>
        <dbReference type="HAMAP-Rule" id="MF_00075"/>
    </source>
</evidence>
<feature type="chain" id="PRO_0000095743" description="Translation initiation factor IF-1 1">
    <location>
        <begin position="1"/>
        <end position="72"/>
    </location>
</feature>
<feature type="domain" description="S1-like" evidence="1">
    <location>
        <begin position="1"/>
        <end position="72"/>
    </location>
</feature>
<gene>
    <name evidence="1" type="primary">infA1</name>
    <name type="ordered locus">BB0052</name>
</gene>
<accession>Q7WRA2</accession>
<name>IF11_BORBR</name>